<feature type="chain" id="PRO_0000403540" description="Flap endonuclease 1">
    <location>
        <begin position="1"/>
        <end position="595"/>
    </location>
</feature>
<feature type="region of interest" description="N-domain">
    <location>
        <begin position="1"/>
        <end position="106"/>
    </location>
</feature>
<feature type="region of interest" description="I-domain">
    <location>
        <begin position="124"/>
        <end position="267"/>
    </location>
</feature>
<feature type="region of interest" description="Interaction with PCNA" evidence="1">
    <location>
        <begin position="350"/>
        <end position="358"/>
    </location>
</feature>
<feature type="region of interest" description="Disordered" evidence="2">
    <location>
        <begin position="370"/>
        <end position="493"/>
    </location>
</feature>
<feature type="compositionally biased region" description="Polar residues" evidence="2">
    <location>
        <begin position="392"/>
        <end position="401"/>
    </location>
</feature>
<feature type="compositionally biased region" description="Basic and acidic residues" evidence="2">
    <location>
        <begin position="406"/>
        <end position="425"/>
    </location>
</feature>
<feature type="compositionally biased region" description="Acidic residues" evidence="2">
    <location>
        <begin position="426"/>
        <end position="436"/>
    </location>
</feature>
<feature type="compositionally biased region" description="Basic and acidic residues" evidence="2">
    <location>
        <begin position="461"/>
        <end position="475"/>
    </location>
</feature>
<feature type="binding site" evidence="1">
    <location>
        <position position="34"/>
    </location>
    <ligand>
        <name>Mg(2+)</name>
        <dbReference type="ChEBI" id="CHEBI:18420"/>
        <label>1</label>
    </ligand>
</feature>
<feature type="binding site" evidence="1">
    <location>
        <position position="47"/>
    </location>
    <ligand>
        <name>DNA</name>
        <dbReference type="ChEBI" id="CHEBI:16991"/>
    </ligand>
</feature>
<feature type="binding site" evidence="1">
    <location>
        <position position="72"/>
    </location>
    <ligand>
        <name>DNA</name>
        <dbReference type="ChEBI" id="CHEBI:16991"/>
    </ligand>
</feature>
<feature type="binding site" evidence="1">
    <location>
        <position position="88"/>
    </location>
    <ligand>
        <name>Mg(2+)</name>
        <dbReference type="ChEBI" id="CHEBI:18420"/>
        <label>1</label>
    </ligand>
</feature>
<feature type="binding site" evidence="1">
    <location>
        <position position="160"/>
    </location>
    <ligand>
        <name>DNA</name>
        <dbReference type="ChEBI" id="CHEBI:16991"/>
    </ligand>
</feature>
<feature type="binding site" evidence="1">
    <location>
        <position position="160"/>
    </location>
    <ligand>
        <name>Mg(2+)</name>
        <dbReference type="ChEBI" id="CHEBI:18420"/>
        <label>1</label>
    </ligand>
</feature>
<feature type="binding site" evidence="1">
    <location>
        <position position="162"/>
    </location>
    <ligand>
        <name>Mg(2+)</name>
        <dbReference type="ChEBI" id="CHEBI:18420"/>
        <label>1</label>
    </ligand>
</feature>
<feature type="binding site" evidence="1">
    <location>
        <position position="181"/>
    </location>
    <ligand>
        <name>Mg(2+)</name>
        <dbReference type="ChEBI" id="CHEBI:18420"/>
        <label>2</label>
    </ligand>
</feature>
<feature type="binding site" evidence="1">
    <location>
        <position position="183"/>
    </location>
    <ligand>
        <name>Mg(2+)</name>
        <dbReference type="ChEBI" id="CHEBI:18420"/>
        <label>2</label>
    </ligand>
</feature>
<feature type="binding site" evidence="1">
    <location>
        <position position="245"/>
    </location>
    <ligand>
        <name>DNA</name>
        <dbReference type="ChEBI" id="CHEBI:16991"/>
    </ligand>
</feature>
<feature type="binding site" evidence="1">
    <location>
        <position position="247"/>
    </location>
    <ligand>
        <name>DNA</name>
        <dbReference type="ChEBI" id="CHEBI:16991"/>
    </ligand>
</feature>
<feature type="binding site" evidence="1">
    <location>
        <position position="247"/>
    </location>
    <ligand>
        <name>Mg(2+)</name>
        <dbReference type="ChEBI" id="CHEBI:18420"/>
        <label>2</label>
    </ligand>
</feature>
<accession>B3L014</accession>
<sequence length="595" mass="66308">MGIKGLTKFIADAAPNAIKEIKIENLMGRVVAIDASMSLYQFIIAIRDSEQYGNLTNESGETTSHISGLMSRSIKLMENGLKPIYVFDGAPPELKGSELEKRGEKRQKAEELLKKAKEEGNLEEIKKQSGRTVRVTKKQNEEAKKLLTLMGIPVVEAPCEAESQCAFLTKYNLAHATATEDADALVFGTKILIRNLNANASSTSQNKNKNSSKRGYILTEINLEQVLKGLNLNMNEFIDFCILCGCDYCDTIKGIGSKTAYNLIKEYNSIEKIIENIDKNKYQIPSNFRFVEARDSFINPKVLSKEEIKIDWGEPKIEELKNFLIKDYNFNEVRVTNYINRLLKARKVTTQRRLDNFFTACTKKSTKLVNEESQIKKEVKPKRKGKKRDAPNDSSTKLNSKQNKKPKGEKESKTEKDDGDTHNGNDNEEEGGEGETADMGAKDPFDTEEDEDNPSVNFFHHKSDSESGNVKKESTEQEANATPTGDVYSFPNGKDASGSNIHLSSNSTLHSCNNLNGDKAINESMHVVGSSAPEAGNNEIGNGDLFTSNAADCVNNNTDKTQAEIEMKKKNISFLLPYCPKNVTSVKKRKSVQRC</sequence>
<dbReference type="EC" id="3.1.-.-" evidence="1"/>
<dbReference type="EMBL" id="AM910985">
    <property type="protein sequence ID" value="CAQ38232.1"/>
    <property type="molecule type" value="Genomic_DNA"/>
</dbReference>
<dbReference type="RefSeq" id="XP_002261044.1">
    <property type="nucleotide sequence ID" value="XM_002261008.1"/>
</dbReference>
<dbReference type="SMR" id="B3L014"/>
<dbReference type="FunCoup" id="B3L014">
    <property type="interactions" value="596"/>
</dbReference>
<dbReference type="STRING" id="5851.B3L014"/>
<dbReference type="EnsemblProtists" id="CAQ38232">
    <property type="protein sequence ID" value="CAQ38232"/>
    <property type="gene ID" value="PKH_030620"/>
</dbReference>
<dbReference type="GeneID" id="7318916"/>
<dbReference type="KEGG" id="pkn:PKNH_0306500"/>
<dbReference type="VEuPathDB" id="PlasmoDB:PKNH_0306500"/>
<dbReference type="HOGENOM" id="CLU_032444_1_0_1"/>
<dbReference type="InParanoid" id="B3L014"/>
<dbReference type="OMA" id="NFFHHKS"/>
<dbReference type="OrthoDB" id="1937206at2759"/>
<dbReference type="PhylomeDB" id="B3L014"/>
<dbReference type="Proteomes" id="UP000031513">
    <property type="component" value="Chromosome 3"/>
</dbReference>
<dbReference type="GO" id="GO:0005739">
    <property type="term" value="C:mitochondrion"/>
    <property type="evidence" value="ECO:0007669"/>
    <property type="project" value="UniProtKB-SubCell"/>
</dbReference>
<dbReference type="GO" id="GO:0005730">
    <property type="term" value="C:nucleolus"/>
    <property type="evidence" value="ECO:0007669"/>
    <property type="project" value="UniProtKB-SubCell"/>
</dbReference>
<dbReference type="GO" id="GO:0005654">
    <property type="term" value="C:nucleoplasm"/>
    <property type="evidence" value="ECO:0007669"/>
    <property type="project" value="UniProtKB-SubCell"/>
</dbReference>
<dbReference type="GO" id="GO:0008409">
    <property type="term" value="F:5'-3' exonuclease activity"/>
    <property type="evidence" value="ECO:0007669"/>
    <property type="project" value="UniProtKB-UniRule"/>
</dbReference>
<dbReference type="GO" id="GO:0017108">
    <property type="term" value="F:5'-flap endonuclease activity"/>
    <property type="evidence" value="ECO:0007669"/>
    <property type="project" value="UniProtKB-UniRule"/>
</dbReference>
<dbReference type="GO" id="GO:0003677">
    <property type="term" value="F:DNA binding"/>
    <property type="evidence" value="ECO:0007669"/>
    <property type="project" value="UniProtKB-UniRule"/>
</dbReference>
<dbReference type="GO" id="GO:0000287">
    <property type="term" value="F:magnesium ion binding"/>
    <property type="evidence" value="ECO:0007669"/>
    <property type="project" value="UniProtKB-UniRule"/>
</dbReference>
<dbReference type="GO" id="GO:0006284">
    <property type="term" value="P:base-excision repair"/>
    <property type="evidence" value="ECO:0007669"/>
    <property type="project" value="UniProtKB-UniRule"/>
</dbReference>
<dbReference type="GO" id="GO:0043137">
    <property type="term" value="P:DNA replication, removal of RNA primer"/>
    <property type="evidence" value="ECO:0007669"/>
    <property type="project" value="UniProtKB-UniRule"/>
</dbReference>
<dbReference type="CDD" id="cd09907">
    <property type="entry name" value="H3TH_FEN1-Euk"/>
    <property type="match status" value="1"/>
</dbReference>
<dbReference type="CDD" id="cd09867">
    <property type="entry name" value="PIN_FEN1"/>
    <property type="match status" value="1"/>
</dbReference>
<dbReference type="FunFam" id="1.10.150.20:FF:000009">
    <property type="entry name" value="Flap endonuclease 1"/>
    <property type="match status" value="1"/>
</dbReference>
<dbReference type="FunFam" id="3.40.50.1010:FF:000016">
    <property type="entry name" value="Flap endonuclease 1"/>
    <property type="match status" value="1"/>
</dbReference>
<dbReference type="Gene3D" id="1.10.150.20">
    <property type="entry name" value="5' to 3' exonuclease, C-terminal subdomain"/>
    <property type="match status" value="1"/>
</dbReference>
<dbReference type="Gene3D" id="3.40.50.1010">
    <property type="entry name" value="5'-nuclease"/>
    <property type="match status" value="1"/>
</dbReference>
<dbReference type="HAMAP" id="MF_00614">
    <property type="entry name" value="Fen"/>
    <property type="match status" value="1"/>
</dbReference>
<dbReference type="InterPro" id="IPR002421">
    <property type="entry name" value="5-3_exonuclease"/>
</dbReference>
<dbReference type="InterPro" id="IPR036279">
    <property type="entry name" value="5-3_exonuclease_C_sf"/>
</dbReference>
<dbReference type="InterPro" id="IPR023426">
    <property type="entry name" value="Flap_endonuc"/>
</dbReference>
<dbReference type="InterPro" id="IPR008918">
    <property type="entry name" value="HhH2"/>
</dbReference>
<dbReference type="InterPro" id="IPR029060">
    <property type="entry name" value="PIN-like_dom_sf"/>
</dbReference>
<dbReference type="InterPro" id="IPR006086">
    <property type="entry name" value="XPG-I_dom"/>
</dbReference>
<dbReference type="InterPro" id="IPR006084">
    <property type="entry name" value="XPG/Rad2"/>
</dbReference>
<dbReference type="InterPro" id="IPR019974">
    <property type="entry name" value="XPG_CS"/>
</dbReference>
<dbReference type="InterPro" id="IPR006085">
    <property type="entry name" value="XPG_DNA_repair_N"/>
</dbReference>
<dbReference type="PANTHER" id="PTHR11081:SF9">
    <property type="entry name" value="FLAP ENDONUCLEASE 1"/>
    <property type="match status" value="1"/>
</dbReference>
<dbReference type="PANTHER" id="PTHR11081">
    <property type="entry name" value="FLAP ENDONUCLEASE FAMILY MEMBER"/>
    <property type="match status" value="1"/>
</dbReference>
<dbReference type="Pfam" id="PF00867">
    <property type="entry name" value="XPG_I"/>
    <property type="match status" value="1"/>
</dbReference>
<dbReference type="Pfam" id="PF00752">
    <property type="entry name" value="XPG_N"/>
    <property type="match status" value="1"/>
</dbReference>
<dbReference type="PRINTS" id="PR00853">
    <property type="entry name" value="XPGRADSUPER"/>
</dbReference>
<dbReference type="SMART" id="SM00475">
    <property type="entry name" value="53EXOc"/>
    <property type="match status" value="1"/>
</dbReference>
<dbReference type="SMART" id="SM00279">
    <property type="entry name" value="HhH2"/>
    <property type="match status" value="1"/>
</dbReference>
<dbReference type="SMART" id="SM00484">
    <property type="entry name" value="XPGI"/>
    <property type="match status" value="1"/>
</dbReference>
<dbReference type="SMART" id="SM00485">
    <property type="entry name" value="XPGN"/>
    <property type="match status" value="1"/>
</dbReference>
<dbReference type="SUPFAM" id="SSF47807">
    <property type="entry name" value="5' to 3' exonuclease, C-terminal subdomain"/>
    <property type="match status" value="1"/>
</dbReference>
<dbReference type="SUPFAM" id="SSF88723">
    <property type="entry name" value="PIN domain-like"/>
    <property type="match status" value="1"/>
</dbReference>
<dbReference type="PROSITE" id="PS00841">
    <property type="entry name" value="XPG_1"/>
    <property type="match status" value="1"/>
</dbReference>
<dbReference type="PROSITE" id="PS00842">
    <property type="entry name" value="XPG_2"/>
    <property type="match status" value="1"/>
</dbReference>
<comment type="function">
    <text evidence="1">Structure-specific nuclease with 5'-flap endonuclease and 5'-3' exonuclease activities involved in DNA replication and repair. During DNA replication, cleaves the 5'-overhanging flap structure that is generated by displacement synthesis when DNA polymerase encounters the 5'-end of a downstream Okazaki fragment. It enters the flap from the 5'-end and then tracks to cleave the flap base, leaving a nick for ligation. Also involved in the long patch base excision repair (LP-BER) pathway, by cleaving within the apurinic/apyrimidinic (AP) site-terminated flap. Acts as a genome stabilization factor that prevents flaps from equilibrating into structures that lead to duplications and deletions. Also possesses 5'-3' exonuclease activity on nicked or gapped double-stranded DNA, and exhibits RNase H activity. Also involved in replication and repair of rDNA and in repairing mitochondrial DNA.</text>
</comment>
<comment type="cofactor">
    <cofactor evidence="1">
        <name>Mg(2+)</name>
        <dbReference type="ChEBI" id="CHEBI:18420"/>
    </cofactor>
    <text evidence="1">Binds 2 magnesium ions per subunit. They probably participate in the reaction catalyzed by the enzyme. May bind an additional third magnesium ion after substrate binding.</text>
</comment>
<comment type="subunit">
    <text evidence="1">Interacts with PCNA. Three molecules of FEN1 bind to one PCNA trimer with each molecule binding to one PCNA monomer. PCNA stimulates the nuclease activity without altering cleavage specificity.</text>
</comment>
<comment type="subcellular location">
    <subcellularLocation>
        <location evidence="1">Nucleus</location>
        <location evidence="1">Nucleolus</location>
    </subcellularLocation>
    <subcellularLocation>
        <location evidence="1">Nucleus</location>
        <location evidence="1">Nucleoplasm</location>
    </subcellularLocation>
    <subcellularLocation>
        <location evidence="1">Mitochondrion</location>
    </subcellularLocation>
    <text evidence="1">Resides mostly in the nucleoli and relocalizes to the nucleoplasm upon DNA damage.</text>
</comment>
<comment type="PTM">
    <text evidence="1">Phosphorylated. Phosphorylation upon DNA damage induces relocalization to the nuclear plasma.</text>
</comment>
<comment type="similarity">
    <text evidence="1">Belongs to the XPG/RAD2 endonuclease family. FEN1 subfamily.</text>
</comment>
<keyword id="KW-0227">DNA damage</keyword>
<keyword id="KW-0234">DNA repair</keyword>
<keyword id="KW-0235">DNA replication</keyword>
<keyword id="KW-0255">Endonuclease</keyword>
<keyword id="KW-0269">Exonuclease</keyword>
<keyword id="KW-0378">Hydrolase</keyword>
<keyword id="KW-0460">Magnesium</keyword>
<keyword id="KW-0479">Metal-binding</keyword>
<keyword id="KW-0496">Mitochondrion</keyword>
<keyword id="KW-0540">Nuclease</keyword>
<keyword id="KW-0539">Nucleus</keyword>
<keyword id="KW-0597">Phosphoprotein</keyword>
<keyword id="KW-1185">Reference proteome</keyword>
<name>FEN1_PLAKH</name>
<gene>
    <name evidence="1" type="primary">FEN1</name>
    <name type="ORF">PKH_030620</name>
</gene>
<protein>
    <recommendedName>
        <fullName evidence="1">Flap endonuclease 1</fullName>
        <shortName evidence="1">FEN-1</shortName>
        <ecNumber evidence="1">3.1.-.-</ecNumber>
    </recommendedName>
    <alternativeName>
        <fullName evidence="1">Flap structure-specific endonuclease 1</fullName>
    </alternativeName>
</protein>
<organism>
    <name type="scientific">Plasmodium knowlesi (strain H)</name>
    <dbReference type="NCBI Taxonomy" id="5851"/>
    <lineage>
        <taxon>Eukaryota</taxon>
        <taxon>Sar</taxon>
        <taxon>Alveolata</taxon>
        <taxon>Apicomplexa</taxon>
        <taxon>Aconoidasida</taxon>
        <taxon>Haemosporida</taxon>
        <taxon>Plasmodiidae</taxon>
        <taxon>Plasmodium</taxon>
        <taxon>Plasmodium (Plasmodium)</taxon>
    </lineage>
</organism>
<evidence type="ECO:0000255" key="1">
    <source>
        <dbReference type="HAMAP-Rule" id="MF_03140"/>
    </source>
</evidence>
<evidence type="ECO:0000256" key="2">
    <source>
        <dbReference type="SAM" id="MobiDB-lite"/>
    </source>
</evidence>
<reference key="1">
    <citation type="journal article" date="2008" name="Nature">
        <title>The genome of the simian and human malaria parasite Plasmodium knowlesi.</title>
        <authorList>
            <person name="Pain A."/>
            <person name="Boehme U."/>
            <person name="Berry A.E."/>
            <person name="Mungall K."/>
            <person name="Finn R.D."/>
            <person name="Jackson A.P."/>
            <person name="Mourier T."/>
            <person name="Mistry J."/>
            <person name="Pasini E.M."/>
            <person name="Aslett M.A."/>
            <person name="Balasubrammaniam S."/>
            <person name="Borgwardt K."/>
            <person name="Brooks K."/>
            <person name="Carret C."/>
            <person name="Carver T.J."/>
            <person name="Cherevach I."/>
            <person name="Chillingworth T."/>
            <person name="Clark T.G."/>
            <person name="Galinski M.R."/>
            <person name="Hall N."/>
            <person name="Harper D."/>
            <person name="Harris D."/>
            <person name="Hauser H."/>
            <person name="Ivens A."/>
            <person name="Janssen C.S."/>
            <person name="Keane T."/>
            <person name="Larke N."/>
            <person name="Lapp S."/>
            <person name="Marti M."/>
            <person name="Moule S."/>
            <person name="Meyer I.M."/>
            <person name="Ormond D."/>
            <person name="Peters N."/>
            <person name="Sanders M."/>
            <person name="Sanders S."/>
            <person name="Sargeant T.J."/>
            <person name="Simmonds M."/>
            <person name="Smith F."/>
            <person name="Squares R."/>
            <person name="Thurston S."/>
            <person name="Tivey A.R."/>
            <person name="Walker D."/>
            <person name="White B."/>
            <person name="Zuiderwijk E."/>
            <person name="Churcher C."/>
            <person name="Quail M.A."/>
            <person name="Cowman A.F."/>
            <person name="Turner C.M.R."/>
            <person name="Rajandream M.A."/>
            <person name="Kocken C.H.M."/>
            <person name="Thomas A.W."/>
            <person name="Newbold C.I."/>
            <person name="Barrell B.G."/>
            <person name="Berriman M."/>
        </authorList>
    </citation>
    <scope>NUCLEOTIDE SEQUENCE [LARGE SCALE GENOMIC DNA]</scope>
    <source>
        <strain>H</strain>
    </source>
</reference>
<proteinExistence type="inferred from homology"/>